<organism>
    <name type="scientific">Prochlorococcus marinus (strain NATL2A)</name>
    <dbReference type="NCBI Taxonomy" id="59920"/>
    <lineage>
        <taxon>Bacteria</taxon>
        <taxon>Bacillati</taxon>
        <taxon>Cyanobacteriota</taxon>
        <taxon>Cyanophyceae</taxon>
        <taxon>Synechococcales</taxon>
        <taxon>Prochlorococcaceae</taxon>
        <taxon>Prochlorococcus</taxon>
    </lineage>
</organism>
<feature type="chain" id="PRO_0000362728" description="NAD(P)H-quinone oxidoreductase subunit 3">
    <location>
        <begin position="1"/>
        <end position="120"/>
    </location>
</feature>
<feature type="transmembrane region" description="Helical" evidence="1">
    <location>
        <begin position="6"/>
        <end position="26"/>
    </location>
</feature>
<feature type="transmembrane region" description="Helical" evidence="1">
    <location>
        <begin position="64"/>
        <end position="84"/>
    </location>
</feature>
<feature type="transmembrane region" description="Helical" evidence="1">
    <location>
        <begin position="89"/>
        <end position="109"/>
    </location>
</feature>
<keyword id="KW-0472">Membrane</keyword>
<keyword id="KW-0520">NAD</keyword>
<keyword id="KW-0521">NADP</keyword>
<keyword id="KW-0618">Plastoquinone</keyword>
<keyword id="KW-0874">Quinone</keyword>
<keyword id="KW-1185">Reference proteome</keyword>
<keyword id="KW-0793">Thylakoid</keyword>
<keyword id="KW-1278">Translocase</keyword>
<keyword id="KW-0812">Transmembrane</keyword>
<keyword id="KW-1133">Transmembrane helix</keyword>
<keyword id="KW-0813">Transport</keyword>
<dbReference type="EC" id="7.1.1.-" evidence="1"/>
<dbReference type="EMBL" id="CP000095">
    <property type="protein sequence ID" value="AAZ59148.1"/>
    <property type="molecule type" value="Genomic_DNA"/>
</dbReference>
<dbReference type="RefSeq" id="WP_011294293.1">
    <property type="nucleotide sequence ID" value="NC_007335.2"/>
</dbReference>
<dbReference type="SMR" id="Q46M04"/>
<dbReference type="STRING" id="59920.PMN2A_1660"/>
<dbReference type="KEGG" id="pmn:PMN2A_1660"/>
<dbReference type="HOGENOM" id="CLU_119549_1_1_3"/>
<dbReference type="OrthoDB" id="9791970at2"/>
<dbReference type="PhylomeDB" id="Q46M04"/>
<dbReference type="Proteomes" id="UP000002535">
    <property type="component" value="Chromosome"/>
</dbReference>
<dbReference type="GO" id="GO:0030964">
    <property type="term" value="C:NADH dehydrogenase complex"/>
    <property type="evidence" value="ECO:0007669"/>
    <property type="project" value="TreeGrafter"/>
</dbReference>
<dbReference type="GO" id="GO:0031676">
    <property type="term" value="C:plasma membrane-derived thylakoid membrane"/>
    <property type="evidence" value="ECO:0007669"/>
    <property type="project" value="UniProtKB-SubCell"/>
</dbReference>
<dbReference type="GO" id="GO:0008137">
    <property type="term" value="F:NADH dehydrogenase (ubiquinone) activity"/>
    <property type="evidence" value="ECO:0007669"/>
    <property type="project" value="InterPro"/>
</dbReference>
<dbReference type="GO" id="GO:0048038">
    <property type="term" value="F:quinone binding"/>
    <property type="evidence" value="ECO:0007669"/>
    <property type="project" value="UniProtKB-KW"/>
</dbReference>
<dbReference type="GO" id="GO:0019684">
    <property type="term" value="P:photosynthesis, light reaction"/>
    <property type="evidence" value="ECO:0007669"/>
    <property type="project" value="UniProtKB-UniRule"/>
</dbReference>
<dbReference type="Gene3D" id="1.20.58.1610">
    <property type="entry name" value="NADH:ubiquinone/plastoquinone oxidoreductase, chain 3"/>
    <property type="match status" value="1"/>
</dbReference>
<dbReference type="HAMAP" id="MF_01394">
    <property type="entry name" value="NDH1_NuoA"/>
    <property type="match status" value="1"/>
</dbReference>
<dbReference type="InterPro" id="IPR023043">
    <property type="entry name" value="NAD(P)H_OxRDtase_bac/plastid"/>
</dbReference>
<dbReference type="InterPro" id="IPR000440">
    <property type="entry name" value="NADH_UbQ/plastoQ_OxRdtase_su3"/>
</dbReference>
<dbReference type="InterPro" id="IPR038430">
    <property type="entry name" value="NDAH_ubi_oxred_su3_sf"/>
</dbReference>
<dbReference type="PANTHER" id="PTHR11058">
    <property type="entry name" value="NADH-UBIQUINONE OXIDOREDUCTASE CHAIN 3"/>
    <property type="match status" value="1"/>
</dbReference>
<dbReference type="PANTHER" id="PTHR11058:SF9">
    <property type="entry name" value="NADH-UBIQUINONE OXIDOREDUCTASE CHAIN 3"/>
    <property type="match status" value="1"/>
</dbReference>
<dbReference type="Pfam" id="PF00507">
    <property type="entry name" value="Oxidored_q4"/>
    <property type="match status" value="1"/>
</dbReference>
<name>NU3C_PROMT</name>
<evidence type="ECO:0000255" key="1">
    <source>
        <dbReference type="HAMAP-Rule" id="MF_01394"/>
    </source>
</evidence>
<proteinExistence type="inferred from homology"/>
<gene>
    <name evidence="1" type="primary">ndhC</name>
    <name type="ordered locus">PMN2A_1660</name>
</gene>
<accession>Q46M04</accession>
<reference key="1">
    <citation type="journal article" date="2007" name="PLoS Genet.">
        <title>Patterns and implications of gene gain and loss in the evolution of Prochlorococcus.</title>
        <authorList>
            <person name="Kettler G.C."/>
            <person name="Martiny A.C."/>
            <person name="Huang K."/>
            <person name="Zucker J."/>
            <person name="Coleman M.L."/>
            <person name="Rodrigue S."/>
            <person name="Chen F."/>
            <person name="Lapidus A."/>
            <person name="Ferriera S."/>
            <person name="Johnson J."/>
            <person name="Steglich C."/>
            <person name="Church G.M."/>
            <person name="Richardson P."/>
            <person name="Chisholm S.W."/>
        </authorList>
    </citation>
    <scope>NUCLEOTIDE SEQUENCE [LARGE SCALE GENOMIC DNA]</scope>
    <source>
        <strain>NATL2A</strain>
    </source>
</reference>
<protein>
    <recommendedName>
        <fullName evidence="1">NAD(P)H-quinone oxidoreductase subunit 3</fullName>
        <ecNumber evidence="1">7.1.1.-</ecNumber>
    </recommendedName>
    <alternativeName>
        <fullName evidence="1">NAD(P)H dehydrogenase subunit 3</fullName>
    </alternativeName>
    <alternativeName>
        <fullName evidence="1">NADH-plastoquinone oxidoreductase subunit 3</fullName>
    </alternativeName>
    <alternativeName>
        <fullName evidence="1">NDH-1 subunit 3</fullName>
        <shortName evidence="1">NDH-C</shortName>
    </alternativeName>
</protein>
<sequence length="120" mass="13581">MFSLQGYEYFLGFLLISGAVPILALTTNKLIAPKSKAGERQLTYESGMEPIGGAWIQFNIRYYMFALVFVIFDVETVFLYPWAVAFHKLGLLAFIEALVFITILVVALAYAWRKGALEWS</sequence>
<comment type="function">
    <text evidence="1">NDH-1 shuttles electrons from an unknown electron donor, via FMN and iron-sulfur (Fe-S) centers, to quinones in the respiratory and/or the photosynthetic chain. The immediate electron acceptor for the enzyme in this species is believed to be plastoquinone. Couples the redox reaction to proton translocation, and thus conserves the redox energy in a proton gradient. Cyanobacterial NDH-1 also plays a role in inorganic carbon-concentration.</text>
</comment>
<comment type="catalytic activity">
    <reaction evidence="1">
        <text>a plastoquinone + NADH + (n+1) H(+)(in) = a plastoquinol + NAD(+) + n H(+)(out)</text>
        <dbReference type="Rhea" id="RHEA:42608"/>
        <dbReference type="Rhea" id="RHEA-COMP:9561"/>
        <dbReference type="Rhea" id="RHEA-COMP:9562"/>
        <dbReference type="ChEBI" id="CHEBI:15378"/>
        <dbReference type="ChEBI" id="CHEBI:17757"/>
        <dbReference type="ChEBI" id="CHEBI:57540"/>
        <dbReference type="ChEBI" id="CHEBI:57945"/>
        <dbReference type="ChEBI" id="CHEBI:62192"/>
    </reaction>
</comment>
<comment type="catalytic activity">
    <reaction evidence="1">
        <text>a plastoquinone + NADPH + (n+1) H(+)(in) = a plastoquinol + NADP(+) + n H(+)(out)</text>
        <dbReference type="Rhea" id="RHEA:42612"/>
        <dbReference type="Rhea" id="RHEA-COMP:9561"/>
        <dbReference type="Rhea" id="RHEA-COMP:9562"/>
        <dbReference type="ChEBI" id="CHEBI:15378"/>
        <dbReference type="ChEBI" id="CHEBI:17757"/>
        <dbReference type="ChEBI" id="CHEBI:57783"/>
        <dbReference type="ChEBI" id="CHEBI:58349"/>
        <dbReference type="ChEBI" id="CHEBI:62192"/>
    </reaction>
</comment>
<comment type="subunit">
    <text evidence="1">NDH-1 can be composed of about 15 different subunits; different subcomplexes with different compositions have been identified which probably have different functions.</text>
</comment>
<comment type="subcellular location">
    <subcellularLocation>
        <location evidence="1">Cellular thylakoid membrane</location>
        <topology evidence="1">Multi-pass membrane protein</topology>
    </subcellularLocation>
</comment>
<comment type="similarity">
    <text evidence="1">Belongs to the complex I subunit 3 family.</text>
</comment>